<keyword id="KW-0066">ATP synthesis</keyword>
<keyword id="KW-0997">Cell inner membrane</keyword>
<keyword id="KW-1003">Cell membrane</keyword>
<keyword id="KW-0139">CF(1)</keyword>
<keyword id="KW-0375">Hydrogen ion transport</keyword>
<keyword id="KW-0406">Ion transport</keyword>
<keyword id="KW-0472">Membrane</keyword>
<keyword id="KW-0813">Transport</keyword>
<reference key="1">
    <citation type="submission" date="2007-09" db="EMBL/GenBank/DDBJ databases">
        <title>Complete sequence of chromosome of Serratia proteamaculans 568.</title>
        <authorList>
            <consortium name="US DOE Joint Genome Institute"/>
            <person name="Copeland A."/>
            <person name="Lucas S."/>
            <person name="Lapidus A."/>
            <person name="Barry K."/>
            <person name="Glavina del Rio T."/>
            <person name="Dalin E."/>
            <person name="Tice H."/>
            <person name="Pitluck S."/>
            <person name="Chain P."/>
            <person name="Malfatti S."/>
            <person name="Shin M."/>
            <person name="Vergez L."/>
            <person name="Schmutz J."/>
            <person name="Larimer F."/>
            <person name="Land M."/>
            <person name="Hauser L."/>
            <person name="Kyrpides N."/>
            <person name="Kim E."/>
            <person name="Taghavi S."/>
            <person name="Newman L."/>
            <person name="Vangronsveld J."/>
            <person name="van der Lelie D."/>
            <person name="Richardson P."/>
        </authorList>
    </citation>
    <scope>NUCLEOTIDE SEQUENCE [LARGE SCALE GENOMIC DNA]</scope>
    <source>
        <strain>568</strain>
    </source>
</reference>
<gene>
    <name evidence="1" type="primary">atpG</name>
    <name type="ordered locus">Spro_0007</name>
</gene>
<evidence type="ECO:0000255" key="1">
    <source>
        <dbReference type="HAMAP-Rule" id="MF_00815"/>
    </source>
</evidence>
<feature type="chain" id="PRO_1000062294" description="ATP synthase gamma chain">
    <location>
        <begin position="1"/>
        <end position="287"/>
    </location>
</feature>
<name>ATPG_SERP5</name>
<sequence length="287" mass="31545">MAGAKEIRSKIASVQNTQKITKAMEMVAASKMRKSQERMAASRPYAETMRKVIGHLALGNLEYKHPYLDERDVKRVGYLVVSTDRGLCGGLNINLFKRLLAEMKGWSEKGVETDLALIGSKAASFFGSVGGNVVAQVTGMGDNPSLSELIGPVKVMLQAYDEGRLDKLYIVSNKFINTMSQEPQIVQLLPLPPAEDGELKKKSWDYLYEPDPKVLLDTLLRRYVESQVYQGVVENLASEQAARMVAMKAATDNGGSLIKELQLVYNKARQASITQELTEIVSGASAV</sequence>
<proteinExistence type="inferred from homology"/>
<organism>
    <name type="scientific">Serratia proteamaculans (strain 568)</name>
    <dbReference type="NCBI Taxonomy" id="399741"/>
    <lineage>
        <taxon>Bacteria</taxon>
        <taxon>Pseudomonadati</taxon>
        <taxon>Pseudomonadota</taxon>
        <taxon>Gammaproteobacteria</taxon>
        <taxon>Enterobacterales</taxon>
        <taxon>Yersiniaceae</taxon>
        <taxon>Serratia</taxon>
    </lineage>
</organism>
<comment type="function">
    <text evidence="1">Produces ATP from ADP in the presence of a proton gradient across the membrane. The gamma chain is believed to be important in regulating ATPase activity and the flow of protons through the CF(0) complex.</text>
</comment>
<comment type="subunit">
    <text evidence="1">F-type ATPases have 2 components, CF(1) - the catalytic core - and CF(0) - the membrane proton channel. CF(1) has five subunits: alpha(3), beta(3), gamma(1), delta(1), epsilon(1). CF(0) has three main subunits: a, b and c.</text>
</comment>
<comment type="subcellular location">
    <subcellularLocation>
        <location evidence="1">Cell inner membrane</location>
        <topology evidence="1">Peripheral membrane protein</topology>
    </subcellularLocation>
</comment>
<comment type="similarity">
    <text evidence="1">Belongs to the ATPase gamma chain family.</text>
</comment>
<dbReference type="EMBL" id="CP000826">
    <property type="protein sequence ID" value="ABV39117.1"/>
    <property type="molecule type" value="Genomic_DNA"/>
</dbReference>
<dbReference type="SMR" id="A8G7M7"/>
<dbReference type="STRING" id="399741.Spro_0007"/>
<dbReference type="KEGG" id="spe:Spro_0007"/>
<dbReference type="eggNOG" id="COG0224">
    <property type="taxonomic scope" value="Bacteria"/>
</dbReference>
<dbReference type="HOGENOM" id="CLU_050669_0_1_6"/>
<dbReference type="OrthoDB" id="9812769at2"/>
<dbReference type="GO" id="GO:0005886">
    <property type="term" value="C:plasma membrane"/>
    <property type="evidence" value="ECO:0007669"/>
    <property type="project" value="UniProtKB-SubCell"/>
</dbReference>
<dbReference type="GO" id="GO:0045259">
    <property type="term" value="C:proton-transporting ATP synthase complex"/>
    <property type="evidence" value="ECO:0007669"/>
    <property type="project" value="UniProtKB-KW"/>
</dbReference>
<dbReference type="GO" id="GO:0005524">
    <property type="term" value="F:ATP binding"/>
    <property type="evidence" value="ECO:0007669"/>
    <property type="project" value="UniProtKB-UniRule"/>
</dbReference>
<dbReference type="GO" id="GO:0046933">
    <property type="term" value="F:proton-transporting ATP synthase activity, rotational mechanism"/>
    <property type="evidence" value="ECO:0007669"/>
    <property type="project" value="UniProtKB-UniRule"/>
</dbReference>
<dbReference type="GO" id="GO:0042777">
    <property type="term" value="P:proton motive force-driven plasma membrane ATP synthesis"/>
    <property type="evidence" value="ECO:0007669"/>
    <property type="project" value="UniProtKB-UniRule"/>
</dbReference>
<dbReference type="CDD" id="cd12151">
    <property type="entry name" value="F1-ATPase_gamma"/>
    <property type="match status" value="1"/>
</dbReference>
<dbReference type="FunFam" id="1.10.287.80:FF:000005">
    <property type="entry name" value="ATP synthase gamma chain"/>
    <property type="match status" value="2"/>
</dbReference>
<dbReference type="FunFam" id="3.40.1380.10:FF:000001">
    <property type="entry name" value="ATP synthase gamma chain"/>
    <property type="match status" value="1"/>
</dbReference>
<dbReference type="Gene3D" id="3.40.1380.10">
    <property type="match status" value="1"/>
</dbReference>
<dbReference type="Gene3D" id="1.10.287.80">
    <property type="entry name" value="ATP synthase, gamma subunit, helix hairpin domain"/>
    <property type="match status" value="1"/>
</dbReference>
<dbReference type="HAMAP" id="MF_00815">
    <property type="entry name" value="ATP_synth_gamma_bact"/>
    <property type="match status" value="1"/>
</dbReference>
<dbReference type="InterPro" id="IPR035968">
    <property type="entry name" value="ATP_synth_F1_ATPase_gsu"/>
</dbReference>
<dbReference type="InterPro" id="IPR000131">
    <property type="entry name" value="ATP_synth_F1_gsu"/>
</dbReference>
<dbReference type="InterPro" id="IPR023632">
    <property type="entry name" value="ATP_synth_F1_gsu_CS"/>
</dbReference>
<dbReference type="NCBIfam" id="TIGR01146">
    <property type="entry name" value="ATPsyn_F1gamma"/>
    <property type="match status" value="1"/>
</dbReference>
<dbReference type="NCBIfam" id="NF004144">
    <property type="entry name" value="PRK05621.1-1"/>
    <property type="match status" value="1"/>
</dbReference>
<dbReference type="PANTHER" id="PTHR11693">
    <property type="entry name" value="ATP SYNTHASE GAMMA CHAIN"/>
    <property type="match status" value="1"/>
</dbReference>
<dbReference type="PANTHER" id="PTHR11693:SF22">
    <property type="entry name" value="ATP SYNTHASE SUBUNIT GAMMA, MITOCHONDRIAL"/>
    <property type="match status" value="1"/>
</dbReference>
<dbReference type="Pfam" id="PF00231">
    <property type="entry name" value="ATP-synt"/>
    <property type="match status" value="1"/>
</dbReference>
<dbReference type="PRINTS" id="PR00126">
    <property type="entry name" value="ATPASEGAMMA"/>
</dbReference>
<dbReference type="SUPFAM" id="SSF52943">
    <property type="entry name" value="ATP synthase (F1-ATPase), gamma subunit"/>
    <property type="match status" value="1"/>
</dbReference>
<dbReference type="PROSITE" id="PS00153">
    <property type="entry name" value="ATPASE_GAMMA"/>
    <property type="match status" value="1"/>
</dbReference>
<protein>
    <recommendedName>
        <fullName evidence="1">ATP synthase gamma chain</fullName>
    </recommendedName>
    <alternativeName>
        <fullName evidence="1">ATP synthase F1 sector gamma subunit</fullName>
    </alternativeName>
    <alternativeName>
        <fullName evidence="1">F-ATPase gamma subunit</fullName>
    </alternativeName>
</protein>
<accession>A8G7M7</accession>